<feature type="chain" id="PRO_1000012307" description="Probable manganese-dependent inorganic pyrophosphatase">
    <location>
        <begin position="1"/>
        <end position="309"/>
    </location>
</feature>
<feature type="binding site" evidence="1">
    <location>
        <position position="9"/>
    </location>
    <ligand>
        <name>Mn(2+)</name>
        <dbReference type="ChEBI" id="CHEBI:29035"/>
        <label>1</label>
    </ligand>
</feature>
<feature type="binding site" evidence="1">
    <location>
        <position position="13"/>
    </location>
    <ligand>
        <name>Mn(2+)</name>
        <dbReference type="ChEBI" id="CHEBI:29035"/>
        <label>1</label>
    </ligand>
</feature>
<feature type="binding site" evidence="1">
    <location>
        <position position="15"/>
    </location>
    <ligand>
        <name>Mn(2+)</name>
        <dbReference type="ChEBI" id="CHEBI:29035"/>
        <label>2</label>
    </ligand>
</feature>
<feature type="binding site" evidence="1">
    <location>
        <position position="75"/>
    </location>
    <ligand>
        <name>Mn(2+)</name>
        <dbReference type="ChEBI" id="CHEBI:29035"/>
        <label>1</label>
    </ligand>
</feature>
<feature type="binding site" evidence="1">
    <location>
        <position position="75"/>
    </location>
    <ligand>
        <name>Mn(2+)</name>
        <dbReference type="ChEBI" id="CHEBI:29035"/>
        <label>2</label>
    </ligand>
</feature>
<feature type="binding site" evidence="1">
    <location>
        <position position="97"/>
    </location>
    <ligand>
        <name>Mn(2+)</name>
        <dbReference type="ChEBI" id="CHEBI:29035"/>
        <label>2</label>
    </ligand>
</feature>
<feature type="binding site" evidence="1">
    <location>
        <position position="149"/>
    </location>
    <ligand>
        <name>Mn(2+)</name>
        <dbReference type="ChEBI" id="CHEBI:29035"/>
        <label>2</label>
    </ligand>
</feature>
<name>PPAC_BACC1</name>
<reference key="1">
    <citation type="journal article" date="2004" name="Nucleic Acids Res.">
        <title>The genome sequence of Bacillus cereus ATCC 10987 reveals metabolic adaptations and a large plasmid related to Bacillus anthracis pXO1.</title>
        <authorList>
            <person name="Rasko D.A."/>
            <person name="Ravel J."/>
            <person name="Oekstad O.A."/>
            <person name="Helgason E."/>
            <person name="Cer R.Z."/>
            <person name="Jiang L."/>
            <person name="Shores K.A."/>
            <person name="Fouts D.E."/>
            <person name="Tourasse N.J."/>
            <person name="Angiuoli S.V."/>
            <person name="Kolonay J.F."/>
            <person name="Nelson W.C."/>
            <person name="Kolstoe A.-B."/>
            <person name="Fraser C.M."/>
            <person name="Read T.D."/>
        </authorList>
    </citation>
    <scope>NUCLEOTIDE SEQUENCE [LARGE SCALE GENOMIC DNA]</scope>
    <source>
        <strain>ATCC 10987 / NRS 248</strain>
    </source>
</reference>
<keyword id="KW-0963">Cytoplasm</keyword>
<keyword id="KW-0378">Hydrolase</keyword>
<keyword id="KW-0464">Manganese</keyword>
<keyword id="KW-0479">Metal-binding</keyword>
<protein>
    <recommendedName>
        <fullName evidence="1">Probable manganese-dependent inorganic pyrophosphatase</fullName>
        <ecNumber evidence="1">3.6.1.1</ecNumber>
    </recommendedName>
    <alternativeName>
        <fullName evidence="1">Pyrophosphate phospho-hydrolase</fullName>
        <shortName evidence="1">PPase</shortName>
    </alternativeName>
</protein>
<sequence length="309" mass="33720">MEKVLVFGHKNPDTDAICSAIAYAELKKELGMNAEPVRLGEISGETQFALDYFKVEGPRFVETVANEVDNVILVDHNERQQSANDIESVRVLEVIDHHRIANFETSDPIYYRCEPVGCTATILNKMYKENGITIRKEVAGLMLSAIISDSLLFKSPTCTEQDVAAARELAEIAGVDADNYGLEMLKAGADLSGKTMEQLISLDAKEFQMGNAKVEIAQVNAVDTNDVLVHQAELEKVISAVVEEKGLDLFLFVVTDILTNDSVGLAIGNAANVVEKAYNVSLENNTATLKGVVSRKKQIVPVLTEAFQA</sequence>
<evidence type="ECO:0000255" key="1">
    <source>
        <dbReference type="HAMAP-Rule" id="MF_00207"/>
    </source>
</evidence>
<accession>Q736P6</accession>
<comment type="catalytic activity">
    <reaction evidence="1">
        <text>diphosphate + H2O = 2 phosphate + H(+)</text>
        <dbReference type="Rhea" id="RHEA:24576"/>
        <dbReference type="ChEBI" id="CHEBI:15377"/>
        <dbReference type="ChEBI" id="CHEBI:15378"/>
        <dbReference type="ChEBI" id="CHEBI:33019"/>
        <dbReference type="ChEBI" id="CHEBI:43474"/>
        <dbReference type="EC" id="3.6.1.1"/>
    </reaction>
</comment>
<comment type="cofactor">
    <cofactor evidence="1">
        <name>Mn(2+)</name>
        <dbReference type="ChEBI" id="CHEBI:29035"/>
    </cofactor>
    <text evidence="1">Binds 2 manganese ions per subunit.</text>
</comment>
<comment type="subcellular location">
    <subcellularLocation>
        <location evidence="1">Cytoplasm</location>
    </subcellularLocation>
</comment>
<comment type="similarity">
    <text evidence="1">Belongs to the PPase class C family.</text>
</comment>
<gene>
    <name evidence="1" type="primary">ppaC</name>
    <name type="ordered locus">BCE_2854</name>
</gene>
<proteinExistence type="inferred from homology"/>
<organism>
    <name type="scientific">Bacillus cereus (strain ATCC 10987 / NRS 248)</name>
    <dbReference type="NCBI Taxonomy" id="222523"/>
    <lineage>
        <taxon>Bacteria</taxon>
        <taxon>Bacillati</taxon>
        <taxon>Bacillota</taxon>
        <taxon>Bacilli</taxon>
        <taxon>Bacillales</taxon>
        <taxon>Bacillaceae</taxon>
        <taxon>Bacillus</taxon>
        <taxon>Bacillus cereus group</taxon>
    </lineage>
</organism>
<dbReference type="EC" id="3.6.1.1" evidence="1"/>
<dbReference type="EMBL" id="AE017194">
    <property type="protein sequence ID" value="AAS41766.1"/>
    <property type="molecule type" value="Genomic_DNA"/>
</dbReference>
<dbReference type="SMR" id="Q736P6"/>
<dbReference type="KEGG" id="bca:BCE_2854"/>
<dbReference type="HOGENOM" id="CLU_025243_0_1_9"/>
<dbReference type="Proteomes" id="UP000002527">
    <property type="component" value="Chromosome"/>
</dbReference>
<dbReference type="GO" id="GO:0005737">
    <property type="term" value="C:cytoplasm"/>
    <property type="evidence" value="ECO:0007669"/>
    <property type="project" value="UniProtKB-SubCell"/>
</dbReference>
<dbReference type="GO" id="GO:0004427">
    <property type="term" value="F:inorganic diphosphate phosphatase activity"/>
    <property type="evidence" value="ECO:0007669"/>
    <property type="project" value="UniProtKB-UniRule"/>
</dbReference>
<dbReference type="GO" id="GO:0030145">
    <property type="term" value="F:manganese ion binding"/>
    <property type="evidence" value="ECO:0007669"/>
    <property type="project" value="UniProtKB-UniRule"/>
</dbReference>
<dbReference type="FunFam" id="3.10.310.20:FF:000001">
    <property type="entry name" value="Probable manganese-dependent inorganic pyrophosphatase"/>
    <property type="match status" value="1"/>
</dbReference>
<dbReference type="FunFam" id="3.90.1640.10:FF:000001">
    <property type="entry name" value="Probable manganese-dependent inorganic pyrophosphatase"/>
    <property type="match status" value="1"/>
</dbReference>
<dbReference type="Gene3D" id="3.10.310.20">
    <property type="entry name" value="DHHA2 domain"/>
    <property type="match status" value="1"/>
</dbReference>
<dbReference type="Gene3D" id="3.90.1640.10">
    <property type="entry name" value="inorganic pyrophosphatase (n-terminal core)"/>
    <property type="match status" value="1"/>
</dbReference>
<dbReference type="HAMAP" id="MF_00207">
    <property type="entry name" value="PPase_C"/>
    <property type="match status" value="1"/>
</dbReference>
<dbReference type="InterPro" id="IPR001667">
    <property type="entry name" value="DDH_dom"/>
</dbReference>
<dbReference type="InterPro" id="IPR038763">
    <property type="entry name" value="DHH_sf"/>
</dbReference>
<dbReference type="InterPro" id="IPR004097">
    <property type="entry name" value="DHHA2"/>
</dbReference>
<dbReference type="InterPro" id="IPR038222">
    <property type="entry name" value="DHHA2_dom_sf"/>
</dbReference>
<dbReference type="InterPro" id="IPR022934">
    <property type="entry name" value="Mn-dep_inorganic_PyrPase"/>
</dbReference>
<dbReference type="NCBIfam" id="NF003877">
    <property type="entry name" value="PRK05427.1"/>
    <property type="match status" value="1"/>
</dbReference>
<dbReference type="PANTHER" id="PTHR12112">
    <property type="entry name" value="BNIP - RELATED"/>
    <property type="match status" value="1"/>
</dbReference>
<dbReference type="PANTHER" id="PTHR12112:SF22">
    <property type="entry name" value="MANGANESE-DEPENDENT INORGANIC PYROPHOSPHATASE-RELATED"/>
    <property type="match status" value="1"/>
</dbReference>
<dbReference type="Pfam" id="PF01368">
    <property type="entry name" value="DHH"/>
    <property type="match status" value="1"/>
</dbReference>
<dbReference type="Pfam" id="PF02833">
    <property type="entry name" value="DHHA2"/>
    <property type="match status" value="1"/>
</dbReference>
<dbReference type="SMART" id="SM01131">
    <property type="entry name" value="DHHA2"/>
    <property type="match status" value="1"/>
</dbReference>
<dbReference type="SUPFAM" id="SSF64182">
    <property type="entry name" value="DHH phosphoesterases"/>
    <property type="match status" value="1"/>
</dbReference>